<comment type="function">
    <text evidence="1">Channel that opens in response to stretch forces in the membrane lipid bilayer. May participate in the regulation of osmotic pressure changes within the cell.</text>
</comment>
<comment type="subunit">
    <text evidence="1">Homopentamer.</text>
</comment>
<comment type="subcellular location">
    <subcellularLocation>
        <location evidence="1">Cell inner membrane</location>
        <topology evidence="1">Multi-pass membrane protein</topology>
    </subcellularLocation>
</comment>
<comment type="similarity">
    <text evidence="1">Belongs to the MscL family.</text>
</comment>
<protein>
    <recommendedName>
        <fullName evidence="1">Large-conductance mechanosensitive channel</fullName>
    </recommendedName>
</protein>
<reference key="1">
    <citation type="journal article" date="2005" name="J. Bacteriol.">
        <title>Genomic sequence of an otitis media isolate of nontypeable Haemophilus influenzae: comparative study with H. influenzae serotype d, strain KW20.</title>
        <authorList>
            <person name="Harrison A."/>
            <person name="Dyer D.W."/>
            <person name="Gillaspy A."/>
            <person name="Ray W.C."/>
            <person name="Mungur R."/>
            <person name="Carson M.B."/>
            <person name="Zhong H."/>
            <person name="Gipson J."/>
            <person name="Gipson M."/>
            <person name="Johnson L.S."/>
            <person name="Lewis L."/>
            <person name="Bakaletz L.O."/>
            <person name="Munson R.S. Jr."/>
        </authorList>
    </citation>
    <scope>NUCLEOTIDE SEQUENCE [LARGE SCALE GENOMIC DNA]</scope>
    <source>
        <strain>86-028NP</strain>
    </source>
</reference>
<evidence type="ECO:0000255" key="1">
    <source>
        <dbReference type="HAMAP-Rule" id="MF_00115"/>
    </source>
</evidence>
<proteinExistence type="inferred from homology"/>
<sequence>MNFIKEFREFAMRGNVVDMAIGVIIGSAFGKIVSSLVSDIFTPVLGILTGGIDFKDMKFVLAQAQGDVPAVTLNYGLFIQNVIDFIIIAFAIFMMIKVINKVRKPEEKKTAPKAETLLTEIRDLLKNK</sequence>
<organism>
    <name type="scientific">Haemophilus influenzae (strain 86-028NP)</name>
    <dbReference type="NCBI Taxonomy" id="281310"/>
    <lineage>
        <taxon>Bacteria</taxon>
        <taxon>Pseudomonadati</taxon>
        <taxon>Pseudomonadota</taxon>
        <taxon>Gammaproteobacteria</taxon>
        <taxon>Pasteurellales</taxon>
        <taxon>Pasteurellaceae</taxon>
        <taxon>Haemophilus</taxon>
    </lineage>
</organism>
<dbReference type="EMBL" id="CP000057">
    <property type="protein sequence ID" value="AAX87637.1"/>
    <property type="molecule type" value="Genomic_DNA"/>
</dbReference>
<dbReference type="RefSeq" id="WP_005651263.1">
    <property type="nucleotide sequence ID" value="NC_007146.2"/>
</dbReference>
<dbReference type="SMR" id="Q4QMW0"/>
<dbReference type="GeneID" id="93219596"/>
<dbReference type="KEGG" id="hit:NTHI0721"/>
<dbReference type="HOGENOM" id="CLU_095787_0_0_6"/>
<dbReference type="Proteomes" id="UP000002525">
    <property type="component" value="Chromosome"/>
</dbReference>
<dbReference type="GO" id="GO:0005886">
    <property type="term" value="C:plasma membrane"/>
    <property type="evidence" value="ECO:0007669"/>
    <property type="project" value="UniProtKB-SubCell"/>
</dbReference>
<dbReference type="GO" id="GO:0008381">
    <property type="term" value="F:mechanosensitive monoatomic ion channel activity"/>
    <property type="evidence" value="ECO:0007669"/>
    <property type="project" value="UniProtKB-UniRule"/>
</dbReference>
<dbReference type="FunFam" id="1.10.1200.120:FF:000001">
    <property type="entry name" value="Large-conductance mechanosensitive channel"/>
    <property type="match status" value="1"/>
</dbReference>
<dbReference type="Gene3D" id="1.10.1200.120">
    <property type="entry name" value="Large-conductance mechanosensitive channel, MscL, domain 1"/>
    <property type="match status" value="1"/>
</dbReference>
<dbReference type="HAMAP" id="MF_00115">
    <property type="entry name" value="MscL"/>
    <property type="match status" value="1"/>
</dbReference>
<dbReference type="InterPro" id="IPR019823">
    <property type="entry name" value="Mechanosensitive_channel_CS"/>
</dbReference>
<dbReference type="InterPro" id="IPR001185">
    <property type="entry name" value="MS_channel"/>
</dbReference>
<dbReference type="InterPro" id="IPR037673">
    <property type="entry name" value="MSC/AndL"/>
</dbReference>
<dbReference type="InterPro" id="IPR036019">
    <property type="entry name" value="MscL_channel"/>
</dbReference>
<dbReference type="NCBIfam" id="TIGR00220">
    <property type="entry name" value="mscL"/>
    <property type="match status" value="1"/>
</dbReference>
<dbReference type="NCBIfam" id="NF001843">
    <property type="entry name" value="PRK00567.1-4"/>
    <property type="match status" value="1"/>
</dbReference>
<dbReference type="PANTHER" id="PTHR30266:SF2">
    <property type="entry name" value="LARGE-CONDUCTANCE MECHANOSENSITIVE CHANNEL"/>
    <property type="match status" value="1"/>
</dbReference>
<dbReference type="PANTHER" id="PTHR30266">
    <property type="entry name" value="MECHANOSENSITIVE CHANNEL MSCL"/>
    <property type="match status" value="1"/>
</dbReference>
<dbReference type="Pfam" id="PF01741">
    <property type="entry name" value="MscL"/>
    <property type="match status" value="1"/>
</dbReference>
<dbReference type="PRINTS" id="PR01264">
    <property type="entry name" value="MECHCHANNEL"/>
</dbReference>
<dbReference type="SUPFAM" id="SSF81330">
    <property type="entry name" value="Gated mechanosensitive channel"/>
    <property type="match status" value="1"/>
</dbReference>
<dbReference type="PROSITE" id="PS01327">
    <property type="entry name" value="MSCL"/>
    <property type="match status" value="1"/>
</dbReference>
<gene>
    <name evidence="1" type="primary">mscL</name>
    <name type="ordered locus">NTHI0721</name>
</gene>
<accession>Q4QMW0</accession>
<name>MSCL_HAEI8</name>
<keyword id="KW-0997">Cell inner membrane</keyword>
<keyword id="KW-1003">Cell membrane</keyword>
<keyword id="KW-0407">Ion channel</keyword>
<keyword id="KW-0406">Ion transport</keyword>
<keyword id="KW-0472">Membrane</keyword>
<keyword id="KW-0812">Transmembrane</keyword>
<keyword id="KW-1133">Transmembrane helix</keyword>
<keyword id="KW-0813">Transport</keyword>
<feature type="chain" id="PRO_0000238005" description="Large-conductance mechanosensitive channel">
    <location>
        <begin position="1"/>
        <end position="128"/>
    </location>
</feature>
<feature type="transmembrane region" description="Helical" evidence="1">
    <location>
        <begin position="10"/>
        <end position="30"/>
    </location>
</feature>
<feature type="transmembrane region" description="Helical" evidence="1">
    <location>
        <begin position="76"/>
        <end position="96"/>
    </location>
</feature>